<proteinExistence type="evidence at protein level"/>
<organism>
    <name type="scientific">Klebsiella pneumoniae</name>
    <dbReference type="NCBI Taxonomy" id="573"/>
    <lineage>
        <taxon>Bacteria</taxon>
        <taxon>Pseudomonadati</taxon>
        <taxon>Pseudomonadota</taxon>
        <taxon>Gammaproteobacteria</taxon>
        <taxon>Enterobacterales</taxon>
        <taxon>Enterobacteriaceae</taxon>
        <taxon>Klebsiella/Raoultella group</taxon>
        <taxon>Klebsiella</taxon>
        <taxon>Klebsiella pneumoniae complex</taxon>
    </lineage>
</organism>
<protein>
    <recommendedName>
        <fullName evidence="1">PqqA binding protein</fullName>
    </recommendedName>
    <alternativeName>
        <fullName evidence="1">Coenzyme PQQ synthesis protein D</fullName>
    </alternativeName>
    <alternativeName>
        <fullName evidence="1">Pyrroloquinoline quinone biosynthesis protein D</fullName>
    </alternativeName>
</protein>
<comment type="function">
    <text evidence="1">Functions as a PqqA binding protein and presents PqqA to PqqE, in the pyrroloquinoline quinone (PQQ) biosynthetic pathway.</text>
</comment>
<comment type="pathway">
    <text evidence="1">Cofactor biosynthesis; pyrroloquinoline quinone biosynthesis.</text>
</comment>
<comment type="subunit">
    <text evidence="2">Monomer. Interacts with PqqE.</text>
</comment>
<comment type="similarity">
    <text evidence="1">Belongs to the PqqD family.</text>
</comment>
<accession>P27506</accession>
<feature type="chain" id="PRO_0000219963" description="PqqA binding protein">
    <location>
        <begin position="1"/>
        <end position="92"/>
    </location>
</feature>
<gene>
    <name type="primary">pqqD</name>
</gene>
<keyword id="KW-0884">PQQ biosynthesis</keyword>
<sequence length="92" mass="10436">MQKTSIVAFRRGYRLQWEAAQESHVILYPEGMAKLNETAAAILELVDGRRDVAAIIAMLNERFPEAGGVDDDVIEFLQIACQQKWITCREPE</sequence>
<evidence type="ECO:0000255" key="1">
    <source>
        <dbReference type="HAMAP-Rule" id="MF_00655"/>
    </source>
</evidence>
<evidence type="ECO:0000269" key="2">
    <source>
    </source>
</evidence>
<reference key="1">
    <citation type="journal article" date="1992" name="Mol. Gen. Genet.">
        <title>Nucleotide sequence and structure of the Klebsiella pneumoniae pqq operon.</title>
        <authorList>
            <person name="Meulenberg J.J.M."/>
            <person name="Sellink E."/>
            <person name="Riegman N.H."/>
            <person name="Postma P.W."/>
        </authorList>
    </citation>
    <scope>NUCLEOTIDE SEQUENCE [GENOMIC DNA]</scope>
    <source>
        <strain>ATCC 15380 / DSM 2026 / NCTC 418 / NCIMB 418</strain>
    </source>
</reference>
<reference key="2">
    <citation type="journal article" date="1995" name="J. Bacteriol.">
        <title>Synthesis of pyrroloquinoline quinone in vivo and in vitro and detection of an intermediate in the biosynthetic pathway.</title>
        <authorList>
            <person name="Velterop J.S."/>
            <person name="Sellink E."/>
            <person name="Meulenberg J.J."/>
            <person name="David S."/>
            <person name="Bulder I."/>
            <person name="Postma P.W."/>
        </authorList>
    </citation>
    <scope>FUNCTION</scope>
    <source>
        <strain>ATCC 15380 / DSM 2026 / NCTC 418 / NCIMB 418</strain>
    </source>
</reference>
<reference key="3">
    <citation type="journal article" date="2010" name="Chem. Commun. (Camb.)">
        <title>Interaction of PqqE and PqqD in the pyrroloquinoline quinone (PQQ) biosynthetic pathway links PqqD to the radical SAM superfamily.</title>
        <authorList>
            <person name="Wecksler S.R."/>
            <person name="Stoll S."/>
            <person name="Iavarone A.T."/>
            <person name="Imsand E.M."/>
            <person name="Tran H."/>
            <person name="Britt R.D."/>
            <person name="Klinman J.P."/>
        </authorList>
    </citation>
    <scope>INTERACTION WITH PQQE</scope>
</reference>
<name>PQQD_KLEPN</name>
<dbReference type="EMBL" id="X58778">
    <property type="protein sequence ID" value="CAA41582.1"/>
    <property type="molecule type" value="Genomic_DNA"/>
</dbReference>
<dbReference type="PIR" id="S20456">
    <property type="entry name" value="S20456"/>
</dbReference>
<dbReference type="RefSeq" id="WP_004143686.1">
    <property type="nucleotide sequence ID" value="NZ_WYAM01000001.1"/>
</dbReference>
<dbReference type="SMR" id="P27506"/>
<dbReference type="UniPathway" id="UPA00539"/>
<dbReference type="GO" id="GO:0048038">
    <property type="term" value="F:quinone binding"/>
    <property type="evidence" value="ECO:0007669"/>
    <property type="project" value="InterPro"/>
</dbReference>
<dbReference type="GO" id="GO:0018189">
    <property type="term" value="P:pyrroloquinoline quinone biosynthetic process"/>
    <property type="evidence" value="ECO:0007669"/>
    <property type="project" value="UniProtKB-UniRule"/>
</dbReference>
<dbReference type="Gene3D" id="1.10.10.1150">
    <property type="entry name" value="Coenzyme PQQ synthesis protein D (PqqD)"/>
    <property type="match status" value="1"/>
</dbReference>
<dbReference type="HAMAP" id="MF_00655">
    <property type="entry name" value="PQQ_syn_PqqD"/>
    <property type="match status" value="1"/>
</dbReference>
<dbReference type="InterPro" id="IPR008792">
    <property type="entry name" value="PQQD"/>
</dbReference>
<dbReference type="InterPro" id="IPR022479">
    <property type="entry name" value="PqqD_bac"/>
</dbReference>
<dbReference type="InterPro" id="IPR041881">
    <property type="entry name" value="PqqD_sf"/>
</dbReference>
<dbReference type="NCBIfam" id="TIGR03859">
    <property type="entry name" value="PQQ_PqqD"/>
    <property type="match status" value="1"/>
</dbReference>
<dbReference type="NCBIfam" id="NF002535">
    <property type="entry name" value="PRK02079.1"/>
    <property type="match status" value="1"/>
</dbReference>
<dbReference type="Pfam" id="PF05402">
    <property type="entry name" value="PqqD"/>
    <property type="match status" value="1"/>
</dbReference>